<sequence length="77" mass="8806">MRSLIIVLLFPSIIYSMSIRRCEKTEEETWGLKIGLCIIAKDFYPERTDCSVHLPTASEGLITEGNGFRDIRNTDKL</sequence>
<organismHost>
    <name type="scientific">Homo sapiens</name>
    <name type="common">Human</name>
    <dbReference type="NCBI Taxonomy" id="9606"/>
</organismHost>
<keyword id="KW-0426">Late protein</keyword>
<keyword id="KW-1185">Reference proteome</keyword>
<keyword id="KW-0732">Signal</keyword>
<dbReference type="EMBL" id="M35027">
    <property type="protein sequence ID" value="AAA48206.1"/>
    <property type="molecule type" value="Genomic_DNA"/>
</dbReference>
<dbReference type="PIR" id="H42526">
    <property type="entry name" value="H42526"/>
</dbReference>
<dbReference type="SMR" id="P21005"/>
<dbReference type="Proteomes" id="UP000008269">
    <property type="component" value="Segment"/>
</dbReference>
<dbReference type="Gene3D" id="2.60.240.30">
    <property type="match status" value="1"/>
</dbReference>
<dbReference type="InterPro" id="IPR016399">
    <property type="entry name" value="Apoptosis_reg_M-T4"/>
</dbReference>
<dbReference type="InterPro" id="IPR038687">
    <property type="entry name" value="M-T4_sf"/>
</dbReference>
<dbReference type="InterPro" id="IPR007580">
    <property type="entry name" value="Poxvirus_T4p_N"/>
</dbReference>
<dbReference type="Pfam" id="PF04491">
    <property type="entry name" value="Pox_T4_N"/>
    <property type="match status" value="1"/>
</dbReference>
<dbReference type="PIRSF" id="PIRSF003796">
    <property type="entry name" value="Apoptosisregulator_M-T4"/>
    <property type="match status" value="1"/>
</dbReference>
<accession>P21005</accession>
<evidence type="ECO:0000255" key="1"/>
<evidence type="ECO:0000305" key="2"/>
<gene>
    <name type="primary">OPG197</name>
    <name type="ORF">B9R</name>
</gene>
<name>PG195_VACCC</name>
<protein>
    <recommendedName>
        <fullName>Protein OPG195</fullName>
    </recommendedName>
</protein>
<reference key="1">
    <citation type="journal article" date="1990" name="Virology">
        <title>The complete DNA sequence of vaccinia virus.</title>
        <authorList>
            <person name="Goebel S.J."/>
            <person name="Johnson G.P."/>
            <person name="Perkus M.E."/>
            <person name="Davis S.W."/>
            <person name="Winslow J.P."/>
            <person name="Paoletti E."/>
        </authorList>
    </citation>
    <scope>NUCLEOTIDE SEQUENCE [LARGE SCALE GENOMIC DNA]</scope>
</reference>
<reference key="2">
    <citation type="journal article" date="1990" name="Virology">
        <title>Appendix to 'The complete DNA sequence of vaccinia virus'.</title>
        <authorList>
            <person name="Goebel S.J."/>
            <person name="Johnson G.P."/>
            <person name="Perkus M.E."/>
            <person name="Davis S.W."/>
            <person name="Winslow J.P."/>
            <person name="Paoletti E."/>
        </authorList>
    </citation>
    <scope>NUCLEOTIDE SEQUENCE [LARGE SCALE GENOMIC DNA]</scope>
</reference>
<feature type="signal peptide" evidence="1">
    <location>
        <begin position="1"/>
        <end position="17"/>
    </location>
</feature>
<feature type="chain" id="PRO_0000040610" description="Protein OPG195">
    <location>
        <begin position="18"/>
        <end position="77"/>
    </location>
</feature>
<proteinExistence type="evidence at transcript level"/>
<organism>
    <name type="scientific">Vaccinia virus (strain Copenhagen)</name>
    <name type="common">VACV</name>
    <dbReference type="NCBI Taxonomy" id="10249"/>
    <lineage>
        <taxon>Viruses</taxon>
        <taxon>Varidnaviria</taxon>
        <taxon>Bamfordvirae</taxon>
        <taxon>Nucleocytoviricota</taxon>
        <taxon>Pokkesviricetes</taxon>
        <taxon>Chitovirales</taxon>
        <taxon>Poxviridae</taxon>
        <taxon>Chordopoxvirinae</taxon>
        <taxon>Orthopoxvirus</taxon>
        <taxon>Vaccinia virus</taxon>
    </lineage>
</organism>
<comment type="induction">
    <text>Expressed in the late phase of the viral replicative cycle.</text>
</comment>
<comment type="similarity">
    <text evidence="2">Belongs to the chordopoxvirinae B9 protein family.</text>
</comment>